<sequence length="400" mass="43861">MSDKNRVALAFSGGLDTTVCVPLLEEEYGYDEVIGVTVDVGQPEAEFKEAEETAEALDLEHHVVDAKPEFAELCFDAVRANASYQGYPLGTALARPVIAEAILEVAKEEGCSGVAHGSTGKGNDQLRFEAVWRDSDLEVIAPVRELGLTRTFEQEYAEERGLPIEGGDEGKYSIDTNLWSRSIEGSELEEPGYVPPEDIYEWTTAPTAETLEVEVGFEDGYPVSLDGEKLEPVELIETLNDLAGDYGVGRTDIMEDRMLGLKVRENYEHPAATVLLNAHQALEDLVLTKEERAFKKQVDHEWSEKGYQGLVNAPLVDALEGFIDETQDRVTGTVTIRFEGGQARPVGRESPYAVYSAEAASFNTEDVTGGIEQSDATGVAKYHGFQERLANRVIDAADEE</sequence>
<organism>
    <name type="scientific">Natronomonas pharaonis (strain ATCC 35678 / DSM 2160 / CIP 103997 / JCM 8858 / NBRC 14720 / NCIMB 2260 / Gabara)</name>
    <name type="common">Halobacterium pharaonis</name>
    <dbReference type="NCBI Taxonomy" id="348780"/>
    <lineage>
        <taxon>Archaea</taxon>
        <taxon>Methanobacteriati</taxon>
        <taxon>Methanobacteriota</taxon>
        <taxon>Stenosarchaea group</taxon>
        <taxon>Halobacteria</taxon>
        <taxon>Halobacteriales</taxon>
        <taxon>Haloarculaceae</taxon>
        <taxon>Natronomonas</taxon>
    </lineage>
</organism>
<feature type="chain" id="PRO_0000263998" description="Argininosuccinate synthase">
    <location>
        <begin position="1"/>
        <end position="400"/>
    </location>
</feature>
<feature type="binding site" evidence="1">
    <location>
        <begin position="10"/>
        <end position="18"/>
    </location>
    <ligand>
        <name>ATP</name>
        <dbReference type="ChEBI" id="CHEBI:30616"/>
    </ligand>
</feature>
<feature type="binding site" evidence="1">
    <location>
        <position position="87"/>
    </location>
    <ligand>
        <name>L-citrulline</name>
        <dbReference type="ChEBI" id="CHEBI:57743"/>
    </ligand>
</feature>
<feature type="binding site" evidence="1">
    <location>
        <position position="117"/>
    </location>
    <ligand>
        <name>ATP</name>
        <dbReference type="ChEBI" id="CHEBI:30616"/>
    </ligand>
</feature>
<feature type="binding site" evidence="1">
    <location>
        <position position="119"/>
    </location>
    <ligand>
        <name>L-aspartate</name>
        <dbReference type="ChEBI" id="CHEBI:29991"/>
    </ligand>
</feature>
<feature type="binding site" evidence="1">
    <location>
        <position position="123"/>
    </location>
    <ligand>
        <name>L-aspartate</name>
        <dbReference type="ChEBI" id="CHEBI:29991"/>
    </ligand>
</feature>
<feature type="binding site" evidence="1">
    <location>
        <position position="123"/>
    </location>
    <ligand>
        <name>L-citrulline</name>
        <dbReference type="ChEBI" id="CHEBI:57743"/>
    </ligand>
</feature>
<feature type="binding site" evidence="1">
    <location>
        <position position="124"/>
    </location>
    <ligand>
        <name>L-aspartate</name>
        <dbReference type="ChEBI" id="CHEBI:29991"/>
    </ligand>
</feature>
<feature type="binding site" evidence="1">
    <location>
        <position position="127"/>
    </location>
    <ligand>
        <name>L-citrulline</name>
        <dbReference type="ChEBI" id="CHEBI:57743"/>
    </ligand>
</feature>
<feature type="binding site" evidence="1">
    <location>
        <position position="173"/>
    </location>
    <ligand>
        <name>L-citrulline</name>
        <dbReference type="ChEBI" id="CHEBI:57743"/>
    </ligand>
</feature>
<feature type="binding site" evidence="1">
    <location>
        <position position="182"/>
    </location>
    <ligand>
        <name>L-citrulline</name>
        <dbReference type="ChEBI" id="CHEBI:57743"/>
    </ligand>
</feature>
<feature type="binding site" evidence="1">
    <location>
        <position position="255"/>
    </location>
    <ligand>
        <name>L-citrulline</name>
        <dbReference type="ChEBI" id="CHEBI:57743"/>
    </ligand>
</feature>
<feature type="binding site" evidence="1">
    <location>
        <position position="267"/>
    </location>
    <ligand>
        <name>L-citrulline</name>
        <dbReference type="ChEBI" id="CHEBI:57743"/>
    </ligand>
</feature>
<proteinExistence type="inferred from homology"/>
<dbReference type="EC" id="6.3.4.5" evidence="1"/>
<dbReference type="EMBL" id="CR936257">
    <property type="protein sequence ID" value="CAI50717.1"/>
    <property type="molecule type" value="Genomic_DNA"/>
</dbReference>
<dbReference type="RefSeq" id="WP_011324326.1">
    <property type="nucleotide sequence ID" value="NC_007426.1"/>
</dbReference>
<dbReference type="SMR" id="Q3IME2"/>
<dbReference type="STRING" id="348780.NP_5252A"/>
<dbReference type="EnsemblBacteria" id="CAI50717">
    <property type="protein sequence ID" value="CAI50717"/>
    <property type="gene ID" value="NP_5252A"/>
</dbReference>
<dbReference type="GeneID" id="3702521"/>
<dbReference type="KEGG" id="nph:NP_5252A"/>
<dbReference type="eggNOG" id="arCOG00112">
    <property type="taxonomic scope" value="Archaea"/>
</dbReference>
<dbReference type="HOGENOM" id="CLU_032784_4_0_2"/>
<dbReference type="OrthoDB" id="5877at2157"/>
<dbReference type="UniPathway" id="UPA00068">
    <property type="reaction ID" value="UER00113"/>
</dbReference>
<dbReference type="Proteomes" id="UP000002698">
    <property type="component" value="Chromosome"/>
</dbReference>
<dbReference type="GO" id="GO:0005737">
    <property type="term" value="C:cytoplasm"/>
    <property type="evidence" value="ECO:0007669"/>
    <property type="project" value="UniProtKB-SubCell"/>
</dbReference>
<dbReference type="GO" id="GO:0004055">
    <property type="term" value="F:argininosuccinate synthase activity"/>
    <property type="evidence" value="ECO:0007669"/>
    <property type="project" value="UniProtKB-UniRule"/>
</dbReference>
<dbReference type="GO" id="GO:0005524">
    <property type="term" value="F:ATP binding"/>
    <property type="evidence" value="ECO:0007669"/>
    <property type="project" value="UniProtKB-UniRule"/>
</dbReference>
<dbReference type="GO" id="GO:0000053">
    <property type="term" value="P:argininosuccinate metabolic process"/>
    <property type="evidence" value="ECO:0007669"/>
    <property type="project" value="TreeGrafter"/>
</dbReference>
<dbReference type="GO" id="GO:0006526">
    <property type="term" value="P:L-arginine biosynthetic process"/>
    <property type="evidence" value="ECO:0007669"/>
    <property type="project" value="UniProtKB-UniRule"/>
</dbReference>
<dbReference type="GO" id="GO:0000050">
    <property type="term" value="P:urea cycle"/>
    <property type="evidence" value="ECO:0007669"/>
    <property type="project" value="TreeGrafter"/>
</dbReference>
<dbReference type="CDD" id="cd01999">
    <property type="entry name" value="ASS"/>
    <property type="match status" value="1"/>
</dbReference>
<dbReference type="FunFam" id="3.90.1260.10:FF:000007">
    <property type="entry name" value="Argininosuccinate synthase"/>
    <property type="match status" value="1"/>
</dbReference>
<dbReference type="Gene3D" id="3.90.1260.10">
    <property type="entry name" value="Argininosuccinate synthetase, chain A, domain 2"/>
    <property type="match status" value="1"/>
</dbReference>
<dbReference type="Gene3D" id="3.40.50.620">
    <property type="entry name" value="HUPs"/>
    <property type="match status" value="1"/>
</dbReference>
<dbReference type="HAMAP" id="MF_00005">
    <property type="entry name" value="Arg_succ_synth_type1"/>
    <property type="match status" value="1"/>
</dbReference>
<dbReference type="InterPro" id="IPR048268">
    <property type="entry name" value="Arginosuc_syn_C"/>
</dbReference>
<dbReference type="InterPro" id="IPR048267">
    <property type="entry name" value="Arginosuc_syn_N"/>
</dbReference>
<dbReference type="InterPro" id="IPR001518">
    <property type="entry name" value="Arginosuc_synth"/>
</dbReference>
<dbReference type="InterPro" id="IPR018223">
    <property type="entry name" value="Arginosuc_synth_CS"/>
</dbReference>
<dbReference type="InterPro" id="IPR023434">
    <property type="entry name" value="Arginosuc_synth_type_1_subfam"/>
</dbReference>
<dbReference type="InterPro" id="IPR024074">
    <property type="entry name" value="AS_cat/multimer_dom_body"/>
</dbReference>
<dbReference type="InterPro" id="IPR014729">
    <property type="entry name" value="Rossmann-like_a/b/a_fold"/>
</dbReference>
<dbReference type="NCBIfam" id="TIGR00032">
    <property type="entry name" value="argG"/>
    <property type="match status" value="1"/>
</dbReference>
<dbReference type="NCBIfam" id="NF001770">
    <property type="entry name" value="PRK00509.1"/>
    <property type="match status" value="1"/>
</dbReference>
<dbReference type="NCBIfam" id="NF010392">
    <property type="entry name" value="PRK13820.1"/>
    <property type="match status" value="1"/>
</dbReference>
<dbReference type="PANTHER" id="PTHR11587">
    <property type="entry name" value="ARGININOSUCCINATE SYNTHASE"/>
    <property type="match status" value="1"/>
</dbReference>
<dbReference type="PANTHER" id="PTHR11587:SF2">
    <property type="entry name" value="ARGININOSUCCINATE SYNTHASE"/>
    <property type="match status" value="1"/>
</dbReference>
<dbReference type="Pfam" id="PF20979">
    <property type="entry name" value="Arginosuc_syn_C"/>
    <property type="match status" value="1"/>
</dbReference>
<dbReference type="Pfam" id="PF00764">
    <property type="entry name" value="Arginosuc_synth"/>
    <property type="match status" value="1"/>
</dbReference>
<dbReference type="SUPFAM" id="SSF52402">
    <property type="entry name" value="Adenine nucleotide alpha hydrolases-like"/>
    <property type="match status" value="1"/>
</dbReference>
<dbReference type="SUPFAM" id="SSF69864">
    <property type="entry name" value="Argininosuccinate synthetase, C-terminal domain"/>
    <property type="match status" value="1"/>
</dbReference>
<dbReference type="PROSITE" id="PS00564">
    <property type="entry name" value="ARGININOSUCCIN_SYN_1"/>
    <property type="match status" value="1"/>
</dbReference>
<dbReference type="PROSITE" id="PS00565">
    <property type="entry name" value="ARGININOSUCCIN_SYN_2"/>
    <property type="match status" value="1"/>
</dbReference>
<evidence type="ECO:0000255" key="1">
    <source>
        <dbReference type="HAMAP-Rule" id="MF_00005"/>
    </source>
</evidence>
<accession>Q3IME2</accession>
<name>ASSY_NATPD</name>
<protein>
    <recommendedName>
        <fullName evidence="1">Argininosuccinate synthase</fullName>
        <ecNumber evidence="1">6.3.4.5</ecNumber>
    </recommendedName>
    <alternativeName>
        <fullName evidence="1">Citrulline--aspartate ligase</fullName>
    </alternativeName>
</protein>
<reference key="1">
    <citation type="journal article" date="2005" name="Genome Res.">
        <title>Living with two extremes: conclusions from the genome sequence of Natronomonas pharaonis.</title>
        <authorList>
            <person name="Falb M."/>
            <person name="Pfeiffer F."/>
            <person name="Palm P."/>
            <person name="Rodewald K."/>
            <person name="Hickmann V."/>
            <person name="Tittor J."/>
            <person name="Oesterhelt D."/>
        </authorList>
    </citation>
    <scope>NUCLEOTIDE SEQUENCE [LARGE SCALE GENOMIC DNA]</scope>
    <source>
        <strain>ATCC 35678 / DSM 2160 / CIP 103997 / JCM 8858 / NBRC 14720 / NCIMB 2260 / Gabara</strain>
    </source>
</reference>
<comment type="catalytic activity">
    <reaction evidence="1">
        <text>L-citrulline + L-aspartate + ATP = 2-(N(omega)-L-arginino)succinate + AMP + diphosphate + H(+)</text>
        <dbReference type="Rhea" id="RHEA:10932"/>
        <dbReference type="ChEBI" id="CHEBI:15378"/>
        <dbReference type="ChEBI" id="CHEBI:29991"/>
        <dbReference type="ChEBI" id="CHEBI:30616"/>
        <dbReference type="ChEBI" id="CHEBI:33019"/>
        <dbReference type="ChEBI" id="CHEBI:57472"/>
        <dbReference type="ChEBI" id="CHEBI:57743"/>
        <dbReference type="ChEBI" id="CHEBI:456215"/>
        <dbReference type="EC" id="6.3.4.5"/>
    </reaction>
</comment>
<comment type="pathway">
    <text evidence="1">Amino-acid biosynthesis; L-arginine biosynthesis; L-arginine from L-ornithine and carbamoyl phosphate: step 2/3.</text>
</comment>
<comment type="subunit">
    <text evidence="1">Homotetramer.</text>
</comment>
<comment type="subcellular location">
    <subcellularLocation>
        <location evidence="1">Cytoplasm</location>
    </subcellularLocation>
</comment>
<comment type="similarity">
    <text evidence="1">Belongs to the argininosuccinate synthase family. Type 1 subfamily.</text>
</comment>
<gene>
    <name evidence="1" type="primary">argG</name>
    <name type="ordered locus">NP_5252A</name>
</gene>
<keyword id="KW-0028">Amino-acid biosynthesis</keyword>
<keyword id="KW-0055">Arginine biosynthesis</keyword>
<keyword id="KW-0067">ATP-binding</keyword>
<keyword id="KW-0963">Cytoplasm</keyword>
<keyword id="KW-0436">Ligase</keyword>
<keyword id="KW-0547">Nucleotide-binding</keyword>
<keyword id="KW-1185">Reference proteome</keyword>